<feature type="chain" id="PRO_0000059598" description="DNA ligase">
    <location>
        <begin position="1"/>
        <end position="359"/>
    </location>
</feature>
<feature type="active site" description="N6-AMP-lysine intermediate" evidence="2">
    <location>
        <position position="34"/>
    </location>
</feature>
<feature type="binding site" evidence="4">
    <location>
        <begin position="32"/>
        <end position="35"/>
    </location>
    <ligand>
        <name>ATP</name>
        <dbReference type="ChEBI" id="CHEBI:30616"/>
    </ligand>
</feature>
<feature type="binding site" evidence="4">
    <location>
        <position position="39"/>
    </location>
    <ligand>
        <name>ATP</name>
        <dbReference type="ChEBI" id="CHEBI:30616"/>
    </ligand>
</feature>
<feature type="binding site" evidence="4">
    <location>
        <begin position="55"/>
        <end position="57"/>
    </location>
    <ligand>
        <name>ATP</name>
        <dbReference type="ChEBI" id="CHEBI:30616"/>
    </ligand>
</feature>
<feature type="binding site" evidence="4">
    <location>
        <position position="93"/>
    </location>
    <ligand>
        <name>ATP</name>
        <dbReference type="ChEBI" id="CHEBI:30616"/>
    </ligand>
</feature>
<feature type="binding site" evidence="1">
    <location>
        <position position="217"/>
    </location>
    <ligand>
        <name>a divalent metal cation</name>
        <dbReference type="ChEBI" id="CHEBI:60240"/>
    </ligand>
</feature>
<feature type="binding site" evidence="4">
    <location>
        <position position="232"/>
    </location>
    <ligand>
        <name>ATP</name>
        <dbReference type="ChEBI" id="CHEBI:30616"/>
    </ligand>
</feature>
<feature type="binding site" evidence="6">
    <location>
        <position position="238"/>
    </location>
    <ligand>
        <name>ATP</name>
        <dbReference type="ChEBI" id="CHEBI:30616"/>
    </ligand>
</feature>
<feature type="mutagenesis site" description="Complete loss of transadenylation activity." evidence="3">
    <original>K</original>
    <variation>A</variation>
    <location>
        <position position="238"/>
    </location>
</feature>
<feature type="mutagenesis site" description="About 99% loss of transadenylation activity." evidence="3">
    <original>K</original>
    <variation>A</variation>
    <location>
        <position position="240"/>
    </location>
</feature>
<feature type="strand" evidence="7">
    <location>
        <begin position="9"/>
        <end position="13"/>
    </location>
</feature>
<feature type="helix" evidence="7">
    <location>
        <begin position="16"/>
        <end position="26"/>
    </location>
</feature>
<feature type="strand" evidence="7">
    <location>
        <begin position="27"/>
        <end position="33"/>
    </location>
</feature>
<feature type="strand" evidence="7">
    <location>
        <begin position="37"/>
        <end position="45"/>
    </location>
</feature>
<feature type="strand" evidence="7">
    <location>
        <begin position="48"/>
        <end position="53"/>
    </location>
</feature>
<feature type="helix" evidence="7">
    <location>
        <begin position="61"/>
        <end position="66"/>
    </location>
</feature>
<feature type="helix" evidence="7">
    <location>
        <begin position="71"/>
        <end position="78"/>
    </location>
</feature>
<feature type="strand" evidence="7">
    <location>
        <begin position="87"/>
        <end position="99"/>
    </location>
</feature>
<feature type="turn" evidence="7">
    <location>
        <begin position="101"/>
        <end position="103"/>
    </location>
</feature>
<feature type="helix" evidence="7">
    <location>
        <begin position="104"/>
        <end position="109"/>
    </location>
</feature>
<feature type="strand" evidence="7">
    <location>
        <begin position="115"/>
        <end position="119"/>
    </location>
</feature>
<feature type="turn" evidence="7">
    <location>
        <begin position="141"/>
        <end position="143"/>
    </location>
</feature>
<feature type="strand" evidence="7">
    <location>
        <begin position="144"/>
        <end position="153"/>
    </location>
</feature>
<feature type="helix" evidence="7">
    <location>
        <begin position="154"/>
        <end position="159"/>
    </location>
</feature>
<feature type="strand" evidence="7">
    <location>
        <begin position="163"/>
        <end position="166"/>
    </location>
</feature>
<feature type="helix" evidence="7">
    <location>
        <begin position="167"/>
        <end position="184"/>
    </location>
</feature>
<feature type="strand" evidence="7">
    <location>
        <begin position="188"/>
        <end position="192"/>
    </location>
</feature>
<feature type="strand" evidence="7">
    <location>
        <begin position="195"/>
        <end position="200"/>
    </location>
</feature>
<feature type="helix" evidence="7">
    <location>
        <begin position="201"/>
        <end position="212"/>
    </location>
</feature>
<feature type="turn" evidence="7">
    <location>
        <begin position="213"/>
        <end position="215"/>
    </location>
</feature>
<feature type="strand" evidence="7">
    <location>
        <begin position="219"/>
        <end position="222"/>
    </location>
</feature>
<feature type="strand" evidence="7">
    <location>
        <begin position="230"/>
        <end position="240"/>
    </location>
</feature>
<feature type="strand" evidence="7">
    <location>
        <begin position="243"/>
        <end position="253"/>
    </location>
</feature>
<feature type="turn" evidence="7">
    <location>
        <begin position="257"/>
        <end position="259"/>
    </location>
</feature>
<feature type="strand" evidence="7">
    <location>
        <begin position="267"/>
        <end position="271"/>
    </location>
</feature>
<feature type="strand" evidence="7">
    <location>
        <begin position="277"/>
        <end position="281"/>
    </location>
</feature>
<feature type="helix" evidence="7">
    <location>
        <begin position="286"/>
        <end position="299"/>
    </location>
</feature>
<feature type="turn" evidence="7">
    <location>
        <begin position="300"/>
        <end position="302"/>
    </location>
</feature>
<feature type="turn" evidence="7">
    <location>
        <begin position="321"/>
        <end position="324"/>
    </location>
</feature>
<feature type="strand" evidence="7">
    <location>
        <begin position="326"/>
        <end position="334"/>
    </location>
</feature>
<feature type="strand" evidence="7">
    <location>
        <begin position="340"/>
        <end position="342"/>
    </location>
</feature>
<feature type="strand" evidence="7">
    <location>
        <begin position="344"/>
        <end position="348"/>
    </location>
</feature>
<comment type="function">
    <text evidence="3">DNA ligase that seals nicks in double-stranded DNA during DNA replication, DNA recombination and DNA repair in an ATP-dependent reaction. Binds specifically to DNA nicks containing a 3'-OH and a 5'-phosphate group.</text>
</comment>
<comment type="catalytic activity">
    <reaction evidence="2 4">
        <text>ATP + (deoxyribonucleotide)n-3'-hydroxyl + 5'-phospho-(deoxyribonucleotide)m = (deoxyribonucleotide)n+m + AMP + diphosphate.</text>
        <dbReference type="EC" id="6.5.1.1"/>
    </reaction>
</comment>
<comment type="cofactor">
    <cofactor evidence="1">
        <name>a divalent metal cation</name>
        <dbReference type="ChEBI" id="CHEBI:60240"/>
    </cofactor>
</comment>
<comment type="similarity">
    <text evidence="5">Belongs to the ATP-dependent DNA ligase family.</text>
</comment>
<accession>P00969</accession>
<reference key="1">
    <citation type="journal article" date="1983" name="J. Mol. Biol.">
        <title>Complete nucleotide sequence of bacteriophage T7 DNA and the locations of T7 genetic elements.</title>
        <authorList>
            <person name="Dunn J.J."/>
            <person name="Studier F.W."/>
        </authorList>
    </citation>
    <scope>NUCLEOTIDE SEQUENCE [LARGE SCALE GENOMIC DNA]</scope>
</reference>
<reference key="2">
    <citation type="journal article" date="1981" name="J. Mol. Biol.">
        <title>Nucleotide sequence from the genetic left end of bacteriophage T7 DNA to the beginning of gene 4.</title>
        <authorList>
            <person name="Dunn J.J."/>
            <person name="Studier F.W."/>
        </authorList>
    </citation>
    <scope>NUCLEOTIDE SEQUENCE [GENOMIC DNA]</scope>
</reference>
<reference key="3">
    <citation type="journal article" date="1980" name="Nucleic Acids Res.">
        <title>The transcription termination site at the end of the early region of bacteriophage T7 DNA.</title>
        <authorList>
            <person name="Dunn J.J."/>
            <person name="Studier F.W."/>
        </authorList>
    </citation>
    <scope>NUCLEOTIDE SEQUENCE [GENOMIC DNA] OF 278-359</scope>
</reference>
<reference key="4">
    <citation type="journal article" date="1980" name="Proc. Natl. Acad. Sci. U.S.A.">
        <title>Nucleotide sequence of the primary origin of bacteriophage T7 DNA replication: relationship to adjacent genes and regulatory elements.</title>
        <authorList>
            <person name="Saito H."/>
            <person name="Tabor S."/>
            <person name="Tamanoi F."/>
            <person name="Richardson C.C."/>
        </authorList>
    </citation>
    <scope>NUCLEOTIDE SEQUENCE [GENOMIC DNA] OF 1-5</scope>
</reference>
<reference key="5">
    <citation type="journal article" date="2000" name="J. Mol. Biol.">
        <title>Nick recognition by DNA ligases.</title>
        <authorList>
            <person name="Doherty A.J."/>
            <person name="Dafforn T.R."/>
        </authorList>
    </citation>
    <scope>FUNCTION</scope>
    <scope>MUTAGENESIS OF LYS-238 AND LYS-240</scope>
</reference>
<reference key="6">
    <citation type="journal article" date="1996" name="Cell">
        <title>Crystal structure of an ATP-dependent DNA ligase from bacteriophage T7.</title>
        <authorList>
            <person name="Subramanya H.S."/>
            <person name="Doherty A.J."/>
            <person name="Ashford S.R."/>
            <person name="Wigley D.B."/>
        </authorList>
    </citation>
    <scope>X-RAY CRYSTALLOGRAPHY (2.6 ANGSTROMS) IN COMPLEX WITH ATP</scope>
    <scope>CATALYTIC ACTIVITY</scope>
    <scope>DNA-BINDING</scope>
</reference>
<name>DNLI_BPT7</name>
<organism>
    <name type="scientific">Escherichia phage T7</name>
    <name type="common">Bacteriophage T7</name>
    <dbReference type="NCBI Taxonomy" id="10760"/>
    <lineage>
        <taxon>Viruses</taxon>
        <taxon>Duplodnaviria</taxon>
        <taxon>Heunggongvirae</taxon>
        <taxon>Uroviricota</taxon>
        <taxon>Caudoviricetes</taxon>
        <taxon>Autographiviridae</taxon>
        <taxon>Studiervirinae</taxon>
        <taxon>Teseptimavirus</taxon>
        <taxon>Teseptimavirus T7</taxon>
    </lineage>
</organism>
<proteinExistence type="evidence at protein level"/>
<gene>
    <name type="ordered locus">1.3</name>
</gene>
<dbReference type="EC" id="6.5.1.1" evidence="2 4"/>
<dbReference type="EMBL" id="V01124">
    <property type="protein sequence ID" value="CAA24322.1"/>
    <property type="molecule type" value="Genomic_DNA"/>
</dbReference>
<dbReference type="EMBL" id="V01126">
    <property type="protein sequence ID" value="CAA24326.1"/>
    <property type="molecule type" value="Genomic_DNA"/>
</dbReference>
<dbReference type="EMBL" id="V01127">
    <property type="protein sequence ID" value="CAA24336.1"/>
    <property type="molecule type" value="Genomic_DNA"/>
</dbReference>
<dbReference type="EMBL" id="V01146">
    <property type="protein sequence ID" value="CAA24393.1"/>
    <property type="molecule type" value="Genomic_DNA"/>
</dbReference>
<dbReference type="PIR" id="E94615">
    <property type="entry name" value="LQBP37"/>
</dbReference>
<dbReference type="RefSeq" id="NP_041963.1">
    <property type="nucleotide sequence ID" value="NC_001604.1"/>
</dbReference>
<dbReference type="PDB" id="1A0I">
    <property type="method" value="X-ray"/>
    <property type="resolution" value="2.60 A"/>
    <property type="chains" value="A=3-349"/>
</dbReference>
<dbReference type="PDBsum" id="1A0I"/>
<dbReference type="SMR" id="P00969"/>
<dbReference type="MINT" id="P00969"/>
<dbReference type="KEGG" id="vg:1261055"/>
<dbReference type="OrthoDB" id="4135at10239"/>
<dbReference type="BRENDA" id="6.5.1.1">
    <property type="organism ID" value="736"/>
</dbReference>
<dbReference type="EvolutionaryTrace" id="P00969"/>
<dbReference type="Proteomes" id="UP000000840">
    <property type="component" value="Genome"/>
</dbReference>
<dbReference type="GO" id="GO:0005524">
    <property type="term" value="F:ATP binding"/>
    <property type="evidence" value="ECO:0007669"/>
    <property type="project" value="UniProtKB-KW"/>
</dbReference>
<dbReference type="GO" id="GO:0003910">
    <property type="term" value="F:DNA ligase (ATP) activity"/>
    <property type="evidence" value="ECO:0007669"/>
    <property type="project" value="UniProtKB-EC"/>
</dbReference>
<dbReference type="GO" id="GO:0003690">
    <property type="term" value="F:double-stranded DNA binding"/>
    <property type="evidence" value="ECO:0007669"/>
    <property type="project" value="InterPro"/>
</dbReference>
<dbReference type="GO" id="GO:0046872">
    <property type="term" value="F:metal ion binding"/>
    <property type="evidence" value="ECO:0007669"/>
    <property type="project" value="UniProtKB-KW"/>
</dbReference>
<dbReference type="GO" id="GO:0006310">
    <property type="term" value="P:DNA recombination"/>
    <property type="evidence" value="ECO:0007669"/>
    <property type="project" value="UniProtKB-KW"/>
</dbReference>
<dbReference type="GO" id="GO:0006281">
    <property type="term" value="P:DNA repair"/>
    <property type="evidence" value="ECO:0007669"/>
    <property type="project" value="UniProtKB-KW"/>
</dbReference>
<dbReference type="GO" id="GO:0006260">
    <property type="term" value="P:DNA replication"/>
    <property type="evidence" value="ECO:0007669"/>
    <property type="project" value="UniProtKB-KW"/>
</dbReference>
<dbReference type="Gene3D" id="3.30.1490.70">
    <property type="match status" value="1"/>
</dbReference>
<dbReference type="Gene3D" id="3.30.470.30">
    <property type="entry name" value="DNA ligase/mRNA capping enzyme"/>
    <property type="match status" value="1"/>
</dbReference>
<dbReference type="Gene3D" id="2.40.50.140">
    <property type="entry name" value="Nucleic acid-binding proteins"/>
    <property type="match status" value="1"/>
</dbReference>
<dbReference type="InterPro" id="IPR012310">
    <property type="entry name" value="DNA_ligase_ATP-dep_cent"/>
</dbReference>
<dbReference type="InterPro" id="IPR016059">
    <property type="entry name" value="DNA_ligase_ATP-dep_CS"/>
</dbReference>
<dbReference type="InterPro" id="IPR041559">
    <property type="entry name" value="DNA_ligase_ATP-dep_T7_C"/>
</dbReference>
<dbReference type="InterPro" id="IPR016306">
    <property type="entry name" value="DNA_ligase_T7"/>
</dbReference>
<dbReference type="InterPro" id="IPR012340">
    <property type="entry name" value="NA-bd_OB-fold"/>
</dbReference>
<dbReference type="InterPro" id="IPR050326">
    <property type="entry name" value="NAD_dep_DNA_ligaseB"/>
</dbReference>
<dbReference type="PANTHER" id="PTHR47810">
    <property type="entry name" value="DNA LIGASE"/>
    <property type="match status" value="1"/>
</dbReference>
<dbReference type="PANTHER" id="PTHR47810:SF1">
    <property type="entry name" value="DNA LIGASE B"/>
    <property type="match status" value="1"/>
</dbReference>
<dbReference type="Pfam" id="PF01068">
    <property type="entry name" value="DNA_ligase_A_M"/>
    <property type="match status" value="1"/>
</dbReference>
<dbReference type="Pfam" id="PF17879">
    <property type="entry name" value="DNA_ligase_C"/>
    <property type="match status" value="1"/>
</dbReference>
<dbReference type="PIRSF" id="PIRSF001600">
    <property type="entry name" value="DNA_ligase_phage_T3"/>
    <property type="match status" value="1"/>
</dbReference>
<dbReference type="SUPFAM" id="SSF56091">
    <property type="entry name" value="DNA ligase/mRNA capping enzyme, catalytic domain"/>
    <property type="match status" value="1"/>
</dbReference>
<dbReference type="SUPFAM" id="SSF50249">
    <property type="entry name" value="Nucleic acid-binding proteins"/>
    <property type="match status" value="1"/>
</dbReference>
<dbReference type="PROSITE" id="PS00697">
    <property type="entry name" value="DNA_LIGASE_A1"/>
    <property type="match status" value="1"/>
</dbReference>
<dbReference type="PROSITE" id="PS00333">
    <property type="entry name" value="DNA_LIGASE_A2"/>
    <property type="match status" value="1"/>
</dbReference>
<dbReference type="PROSITE" id="PS50160">
    <property type="entry name" value="DNA_LIGASE_A3"/>
    <property type="match status" value="1"/>
</dbReference>
<keyword id="KW-0002">3D-structure</keyword>
<keyword id="KW-0067">ATP-binding</keyword>
<keyword id="KW-0227">DNA damage</keyword>
<keyword id="KW-0233">DNA recombination</keyword>
<keyword id="KW-0234">DNA repair</keyword>
<keyword id="KW-0235">DNA replication</keyword>
<keyword id="KW-0238">DNA-binding</keyword>
<keyword id="KW-0436">Ligase</keyword>
<keyword id="KW-0479">Metal-binding</keyword>
<keyword id="KW-0547">Nucleotide-binding</keyword>
<keyword id="KW-1185">Reference proteome</keyword>
<evidence type="ECO:0000250" key="1"/>
<evidence type="ECO:0000255" key="2">
    <source>
        <dbReference type="PROSITE-ProRule" id="PRU10135"/>
    </source>
</evidence>
<evidence type="ECO:0000269" key="3">
    <source>
    </source>
</evidence>
<evidence type="ECO:0000269" key="4">
    <source>
    </source>
</evidence>
<evidence type="ECO:0000305" key="5"/>
<evidence type="ECO:0000305" key="6">
    <source>
    </source>
</evidence>
<evidence type="ECO:0007829" key="7">
    <source>
        <dbReference type="PDB" id="1A0I"/>
    </source>
</evidence>
<organismHost>
    <name type="scientific">Escherichia coli</name>
    <dbReference type="NCBI Taxonomy" id="562"/>
</organismHost>
<protein>
    <recommendedName>
        <fullName>DNA ligase</fullName>
        <ecNumber evidence="2 4">6.5.1.1</ecNumber>
    </recommendedName>
    <alternativeName>
        <fullName>DNA ligase gp1.3</fullName>
    </alternativeName>
    <alternativeName>
        <fullName>Gene product 1.3</fullName>
        <shortName>Gp1.3</shortName>
    </alternativeName>
</protein>
<sequence length="359" mass="41133">MMNIKTNPFKAVSFVESAIKKALDNAGYLIAEIKYDGVRGNICVDNTANSYWLSRVSKTIPALEHLNGFDVRWKRLLNDDRCFYKDGFMLDGELMVKGVDFNTGSGLLRTKWTDTKNQEFHEELFVEPIRKKDKVPFKLHTGHLHIKLYAILPLHIVESGEDCDVMTLLMQEHVKNMLPLLQEYFPEIEWQAAESYEVYDMVELQQLYEQKRAEGHEGLIVKDPMCIYKRGKKSGWWKMKPENEADGIIQGLVWGTKGLANEGKVIGFEVLLESGRLVNATNISRALMDEFTETVKEATLSQWGFFSPYGIGDNDACTINPYDGWACQISYMEETPDGSLRHPSFVMFRGTEDNPQEKM</sequence>